<reference key="1">
    <citation type="journal article" date="2004" name="Proc. Natl. Acad. Sci. U.S.A.">
        <title>The diploid genome sequence of Candida albicans.</title>
        <authorList>
            <person name="Jones T."/>
            <person name="Federspiel N.A."/>
            <person name="Chibana H."/>
            <person name="Dungan J."/>
            <person name="Kalman S."/>
            <person name="Magee B.B."/>
            <person name="Newport G."/>
            <person name="Thorstenson Y.R."/>
            <person name="Agabian N."/>
            <person name="Magee P.T."/>
            <person name="Davis R.W."/>
            <person name="Scherer S."/>
        </authorList>
    </citation>
    <scope>NUCLEOTIDE SEQUENCE [LARGE SCALE GENOMIC DNA]</scope>
    <source>
        <strain>SC5314 / ATCC MYA-2876</strain>
    </source>
</reference>
<reference key="2">
    <citation type="journal article" date="2007" name="Genome Biol.">
        <title>Assembly of the Candida albicans genome into sixteen supercontigs aligned on the eight chromosomes.</title>
        <authorList>
            <person name="van het Hoog M."/>
            <person name="Rast T.J."/>
            <person name="Martchenko M."/>
            <person name="Grindle S."/>
            <person name="Dignard D."/>
            <person name="Hogues H."/>
            <person name="Cuomo C."/>
            <person name="Berriman M."/>
            <person name="Scherer S."/>
            <person name="Magee B.B."/>
            <person name="Whiteway M."/>
            <person name="Chibana H."/>
            <person name="Nantel A."/>
            <person name="Magee P.T."/>
        </authorList>
    </citation>
    <scope>GENOME REANNOTATION</scope>
    <source>
        <strain>SC5314 / ATCC MYA-2876</strain>
    </source>
</reference>
<reference key="3">
    <citation type="journal article" date="2013" name="Genome Biol.">
        <title>Assembly of a phased diploid Candida albicans genome facilitates allele-specific measurements and provides a simple model for repeat and indel structure.</title>
        <authorList>
            <person name="Muzzey D."/>
            <person name="Schwartz K."/>
            <person name="Weissman J.S."/>
            <person name="Sherlock G."/>
        </authorList>
    </citation>
    <scope>NUCLEOTIDE SEQUENCE [LARGE SCALE GENOMIC DNA]</scope>
    <scope>GENOME REANNOTATION</scope>
    <source>
        <strain>SC5314 / ATCC MYA-2876</strain>
    </source>
</reference>
<reference key="4">
    <citation type="journal article" date="2007" name="Arch. Microbiol.">
        <title>Purification and characterization of a catechol 1,2-dioxygenase from a phenol degrading Candida albicans TL3.</title>
        <authorList>
            <person name="Tsai S.-C."/>
            <person name="Li Y.-K."/>
        </authorList>
    </citation>
    <scope>PROTEIN SEQUENCE OF 56-80; 161-169 AND 212-219</scope>
    <scope>FUNCTION</scope>
    <scope>CATALYTIC ACTIVITY</scope>
    <scope>COFACTOR</scope>
    <scope>ACTIVITY REGULATION</scope>
    <scope>BIOPHYSICOCHEMICAL PROPERTIES</scope>
    <scope>PATHWAY</scope>
    <scope>SUBUNIT</scope>
    <scope>INDUCTION</scope>
    <scope>MASS SPECTROMETRY</scope>
    <source>
        <strain evidence="3">TL3</strain>
    </source>
</reference>
<gene>
    <name type="primary">HQD2</name>
    <name type="ordered locus">CAALFM_C402230CA</name>
    <name type="ORF">CaO19.12036</name>
    <name type="ORF">CaO19.4567</name>
</gene>
<proteinExistence type="evidence at protein level"/>
<evidence type="ECO:0000250" key="1"/>
<evidence type="ECO:0000255" key="2"/>
<evidence type="ECO:0000269" key="3">
    <source>
    </source>
</evidence>
<evidence type="ECO:0000305" key="4"/>
<protein>
    <recommendedName>
        <fullName>Catechol 1,2-dioxygenase</fullName>
        <ecNumber>1.13.11.1</ecNumber>
    </recommendedName>
</protein>
<sequence length="303" mass="33800">MSQAFTESVKTSLGPNATPRAKKLIASLVQHVHDFARENHLTTEDWLWGVDFINRIGQMSDSRRNEGILVCDIIGLETLVDALTNESEQSNHTSSAILGPFYLPDSPVYPNGGSIVQKAIPTDVKCFVRGKVTDTEGKPLGGAQLEVWQCNSAGFYSQQADHDGPEFNLRGTFITDDEGNYSFECLRPTSYPIPYDGPAGDLLKIMDRHPNRPSHIHWRVSHPGYHTLITQIYDAECPYTNNDSVYAVKDDIIVHFEKVDNKDKDLVGKVEYKLDYDISLATESSIQEARAAAKARQDAEIKL</sequence>
<name>HQD2_CANAL</name>
<keyword id="KW-0058">Aromatic hydrocarbons catabolism</keyword>
<keyword id="KW-0223">Dioxygenase</keyword>
<keyword id="KW-0903">Direct protein sequencing</keyword>
<keyword id="KW-0408">Iron</keyword>
<keyword id="KW-0479">Metal-binding</keyword>
<keyword id="KW-0560">Oxidoreductase</keyword>
<keyword id="KW-1185">Reference proteome</keyword>
<organism>
    <name type="scientific">Candida albicans (strain SC5314 / ATCC MYA-2876)</name>
    <name type="common">Yeast</name>
    <dbReference type="NCBI Taxonomy" id="237561"/>
    <lineage>
        <taxon>Eukaryota</taxon>
        <taxon>Fungi</taxon>
        <taxon>Dikarya</taxon>
        <taxon>Ascomycota</taxon>
        <taxon>Saccharomycotina</taxon>
        <taxon>Pichiomycetes</taxon>
        <taxon>Debaryomycetaceae</taxon>
        <taxon>Candida/Lodderomyces clade</taxon>
        <taxon>Candida</taxon>
    </lineage>
</organism>
<comment type="function">
    <text evidence="3">Can cleave 4-methylcatechol at lower rates than catechol, but has no activity with 3-methylcatechol, 4-chlorocatechol, 4-carboxycatechol or hydroxyquinol.</text>
</comment>
<comment type="catalytic activity">
    <reaction evidence="3">
        <text>catechol + O2 = cis,cis-muconate + 2 H(+)</text>
        <dbReference type="Rhea" id="RHEA:23852"/>
        <dbReference type="ChEBI" id="CHEBI:15378"/>
        <dbReference type="ChEBI" id="CHEBI:15379"/>
        <dbReference type="ChEBI" id="CHEBI:18135"/>
        <dbReference type="ChEBI" id="CHEBI:32379"/>
        <dbReference type="EC" id="1.13.11.1"/>
    </reaction>
</comment>
<comment type="cofactor">
    <cofactor evidence="3">
        <name>Fe(3+)</name>
        <dbReference type="ChEBI" id="CHEBI:29034"/>
    </cofactor>
    <text evidence="3">Binds 1 Fe(3+) ion per subunit.</text>
</comment>
<comment type="activity regulation">
    <text evidence="3">Inhibited by Ag(+), Cu(+), Hg(2+) and Pb(2+).</text>
</comment>
<comment type="biophysicochemical properties">
    <kinetics>
        <KM evidence="3">9.3 uM for catechol</KM>
        <KM evidence="3">21.5 uM for 4-methylcatechol</KM>
    </kinetics>
    <phDependence>
        <text evidence="3">Optimum pH is 8.0. Active from pH 7.0 to 9.0.</text>
    </phDependence>
    <temperatureDependence>
        <text evidence="3">Optimum temperature is 25 degrees Celsius. Stable at temperatures lower than 40 degrees Celsius.</text>
    </temperatureDependence>
</comment>
<comment type="pathway">
    <text evidence="3">Aromatic compound metabolism; beta-ketoadipate pathway; 5-oxo-4,5-dihydro-2-furylacetate from catechol: step 1/3.</text>
</comment>
<comment type="subunit">
    <text evidence="3">Homodimer.</text>
</comment>
<comment type="induction">
    <text evidence="3">By phenol.</text>
</comment>
<comment type="mass spectrometry" mass="31994.0" error="2.0" method="Electrospray" evidence="3"/>
<comment type="similarity">
    <text evidence="2">Belongs to the intradiol ring-cleavage dioxygenase family.</text>
</comment>
<dbReference type="EC" id="1.13.11.1"/>
<dbReference type="EMBL" id="CP017626">
    <property type="protein sequence ID" value="AOW28994.1"/>
    <property type="molecule type" value="Genomic_DNA"/>
</dbReference>
<dbReference type="RefSeq" id="XP_722639.1">
    <property type="nucleotide sequence ID" value="XM_717546.1"/>
</dbReference>
<dbReference type="SMR" id="P86029"/>
<dbReference type="STRING" id="237561.P86029"/>
<dbReference type="EnsemblFungi" id="C4_02230C_A-T">
    <property type="protein sequence ID" value="C4_02230C_A-T-p1"/>
    <property type="gene ID" value="C4_02230C_A"/>
</dbReference>
<dbReference type="GeneID" id="3635693"/>
<dbReference type="KEGG" id="cal:CAALFM_C402230CA"/>
<dbReference type="CGD" id="CAL0000188195">
    <property type="gene designation" value="HQD2"/>
</dbReference>
<dbReference type="VEuPathDB" id="FungiDB:C4_02230C_A"/>
<dbReference type="eggNOG" id="ENOG502QU2V">
    <property type="taxonomic scope" value="Eukaryota"/>
</dbReference>
<dbReference type="HOGENOM" id="CLU_046727_1_1_1"/>
<dbReference type="InParanoid" id="P86029"/>
<dbReference type="OMA" id="AMGPKTT"/>
<dbReference type="OrthoDB" id="5238185at2759"/>
<dbReference type="SABIO-RK" id="P86029"/>
<dbReference type="UniPathway" id="UPA00157">
    <property type="reaction ID" value="UER00258"/>
</dbReference>
<dbReference type="PRO" id="PR:P86029"/>
<dbReference type="Proteomes" id="UP000000559">
    <property type="component" value="Chromosome 4"/>
</dbReference>
<dbReference type="GO" id="GO:0018576">
    <property type="term" value="F:catechol 1,2-dioxygenase activity"/>
    <property type="evidence" value="ECO:0000314"/>
    <property type="project" value="UniProtKB"/>
</dbReference>
<dbReference type="GO" id="GO:0051213">
    <property type="term" value="F:dioxygenase activity"/>
    <property type="evidence" value="ECO:0000318"/>
    <property type="project" value="GO_Central"/>
</dbReference>
<dbReference type="GO" id="GO:0008199">
    <property type="term" value="F:ferric iron binding"/>
    <property type="evidence" value="ECO:0000314"/>
    <property type="project" value="UniProtKB"/>
</dbReference>
<dbReference type="GO" id="GO:0005506">
    <property type="term" value="F:iron ion binding"/>
    <property type="evidence" value="ECO:0000314"/>
    <property type="project" value="UniProtKB"/>
</dbReference>
<dbReference type="GO" id="GO:0016702">
    <property type="term" value="F:oxidoreductase activity, acting on single donors with incorporation of molecular oxygen, incorporation of two atoms of oxygen"/>
    <property type="evidence" value="ECO:0000314"/>
    <property type="project" value="UniProtKB"/>
</dbReference>
<dbReference type="GO" id="GO:0019615">
    <property type="term" value="P:catechol catabolic process, ortho-cleavage"/>
    <property type="evidence" value="ECO:0000314"/>
    <property type="project" value="CGD"/>
</dbReference>
<dbReference type="GO" id="GO:0019614">
    <property type="term" value="P:catechol-containing compound catabolic process"/>
    <property type="evidence" value="ECO:0000314"/>
    <property type="project" value="UniProtKB"/>
</dbReference>
<dbReference type="GO" id="GO:0009712">
    <property type="term" value="P:catechol-containing compound metabolic process"/>
    <property type="evidence" value="ECO:0000314"/>
    <property type="project" value="UniProtKB"/>
</dbReference>
<dbReference type="CDD" id="cd03461">
    <property type="entry name" value="1_2-HQD"/>
    <property type="match status" value="1"/>
</dbReference>
<dbReference type="FunFam" id="2.60.130.10:FF:000005">
    <property type="entry name" value="Catechol 1,2-dioxygenase, putative"/>
    <property type="match status" value="1"/>
</dbReference>
<dbReference type="Gene3D" id="2.60.130.10">
    <property type="entry name" value="Aromatic compound dioxygenase"/>
    <property type="match status" value="1"/>
</dbReference>
<dbReference type="InterPro" id="IPR039390">
    <property type="entry name" value="1_2-HQD/HQD"/>
</dbReference>
<dbReference type="InterPro" id="IPR007535">
    <property type="entry name" value="Catechol_dOase_N"/>
</dbReference>
<dbReference type="InterPro" id="IPR000627">
    <property type="entry name" value="Intradiol_dOase_C"/>
</dbReference>
<dbReference type="InterPro" id="IPR015889">
    <property type="entry name" value="Intradiol_dOase_core"/>
</dbReference>
<dbReference type="InterPro" id="IPR050770">
    <property type="entry name" value="Intradiol_RC_Dioxygenase"/>
</dbReference>
<dbReference type="PANTHER" id="PTHR33711">
    <property type="entry name" value="DIOXYGENASE, PUTATIVE (AFU_ORTHOLOGUE AFUA_2G02910)-RELATED"/>
    <property type="match status" value="1"/>
</dbReference>
<dbReference type="PANTHER" id="PTHR33711:SF7">
    <property type="entry name" value="INTRADIOL RING-CLEAVAGE DIOXYGENASES DOMAIN-CONTAINING PROTEIN-RELATED"/>
    <property type="match status" value="1"/>
</dbReference>
<dbReference type="Pfam" id="PF00775">
    <property type="entry name" value="Dioxygenase_C"/>
    <property type="match status" value="1"/>
</dbReference>
<dbReference type="Pfam" id="PF04444">
    <property type="entry name" value="Dioxygenase_N"/>
    <property type="match status" value="1"/>
</dbReference>
<dbReference type="SUPFAM" id="SSF49482">
    <property type="entry name" value="Aromatic compound dioxygenase"/>
    <property type="match status" value="1"/>
</dbReference>
<dbReference type="PROSITE" id="PS00083">
    <property type="entry name" value="INTRADIOL_DIOXYGENAS"/>
    <property type="match status" value="1"/>
</dbReference>
<accession>P86029</accession>
<accession>A0A1D8PLI0</accession>
<accession>Q5AMS9</accession>
<feature type="chain" id="PRO_0000351556" description="Catechol 1,2-dioxygenase">
    <location>
        <begin position="1"/>
        <end position="303"/>
    </location>
</feature>
<feature type="binding site" evidence="1">
    <location>
        <position position="156"/>
    </location>
    <ligand>
        <name>Fe cation</name>
        <dbReference type="ChEBI" id="CHEBI:24875"/>
    </ligand>
</feature>
<feature type="binding site" evidence="1">
    <location>
        <position position="191"/>
    </location>
    <ligand>
        <name>Fe cation</name>
        <dbReference type="ChEBI" id="CHEBI:24875"/>
    </ligand>
</feature>
<feature type="binding site" evidence="1">
    <location>
        <position position="215"/>
    </location>
    <ligand>
        <name>Fe cation</name>
        <dbReference type="ChEBI" id="CHEBI:24875"/>
    </ligand>
</feature>
<feature type="binding site" evidence="1">
    <location>
        <position position="217"/>
    </location>
    <ligand>
        <name>Fe cation</name>
        <dbReference type="ChEBI" id="CHEBI:24875"/>
    </ligand>
</feature>
<feature type="sequence conflict" description="In Ref. 4; AA sequence." evidence="4" ref="4">
    <original>SR</original>
    <variation>DK</variation>
    <location>
        <begin position="62"/>
        <end position="63"/>
    </location>
</feature>
<feature type="sequence conflict" description="In Ref. 4; AA sequence." evidence="4" ref="4">
    <original>C</original>
    <variation>Y</variation>
    <location>
        <position position="71"/>
    </location>
</feature>
<feature type="sequence conflict" description="In Ref. 4; AA sequence." evidence="4" ref="4">
    <original>I</original>
    <variation>L</variation>
    <location>
        <position position="74"/>
    </location>
</feature>
<feature type="sequence conflict" description="In Ref. 4; AA sequence." evidence="4" ref="4">
    <original>T</original>
    <variation>S</variation>
    <location>
        <position position="78"/>
    </location>
</feature>
<feature type="sequence conflict" description="In Ref. 4; AA sequence." evidence="4" ref="4">
    <original>D</original>
    <variation>E</variation>
    <location>
        <position position="161"/>
    </location>
</feature>
<feature type="sequence conflict" description="In Ref. 4; AA sequence." evidence="4" ref="4">
    <original>E</original>
    <variation>D</variation>
    <location>
        <position position="166"/>
    </location>
</feature>
<feature type="sequence conflict" description="In Ref. 4; AA sequence." evidence="4" ref="4">
    <original>I</original>
    <variation>L</variation>
    <location>
        <position position="216"/>
    </location>
</feature>